<sequence>MANVSMRDMLQAGVHFGHQARYWNPKMKPFIFGTRNRVHIINLEQTVPMFNTALKFLSGAAANKGKVLFVGTKRAASEAVKESAIASDQYYVNHRWLGGMLTNWKTVRQSIKRLKDLEIQSQDGTFEKLTKKETLMLNREMEKLEKSLGGIKNMGGLPDALFVIDADHEHIAIREANNLGIPVVAIVDTNSNPDGVDFIVPGNDDAIRAVSLYTNAVATAITEGRENTLVAQAEKDDFVEAE</sequence>
<evidence type="ECO:0000255" key="1">
    <source>
        <dbReference type="HAMAP-Rule" id="MF_00291"/>
    </source>
</evidence>
<evidence type="ECO:0000305" key="2"/>
<organism>
    <name type="scientific">Pseudoalteromonas translucida (strain TAC 125)</name>
    <dbReference type="NCBI Taxonomy" id="326442"/>
    <lineage>
        <taxon>Bacteria</taxon>
        <taxon>Pseudomonadati</taxon>
        <taxon>Pseudomonadota</taxon>
        <taxon>Gammaproteobacteria</taxon>
        <taxon>Alteromonadales</taxon>
        <taxon>Pseudoalteromonadaceae</taxon>
        <taxon>Pseudoalteromonas</taxon>
    </lineage>
</organism>
<accession>Q3IIX4</accession>
<comment type="similarity">
    <text evidence="1">Belongs to the universal ribosomal protein uS2 family.</text>
</comment>
<name>RS2_PSET1</name>
<dbReference type="EMBL" id="CR954246">
    <property type="protein sequence ID" value="CAI87092.1"/>
    <property type="molecule type" value="Genomic_DNA"/>
</dbReference>
<dbReference type="SMR" id="Q3IIX4"/>
<dbReference type="STRING" id="326442.PSHAa2036"/>
<dbReference type="KEGG" id="pha:PSHAa2036"/>
<dbReference type="eggNOG" id="COG0052">
    <property type="taxonomic scope" value="Bacteria"/>
</dbReference>
<dbReference type="HOGENOM" id="CLU_040318_1_0_6"/>
<dbReference type="BioCyc" id="PHAL326442:PSHA_RS10060-MONOMER"/>
<dbReference type="Proteomes" id="UP000006843">
    <property type="component" value="Chromosome I"/>
</dbReference>
<dbReference type="GO" id="GO:0022627">
    <property type="term" value="C:cytosolic small ribosomal subunit"/>
    <property type="evidence" value="ECO:0007669"/>
    <property type="project" value="TreeGrafter"/>
</dbReference>
<dbReference type="GO" id="GO:0003735">
    <property type="term" value="F:structural constituent of ribosome"/>
    <property type="evidence" value="ECO:0007669"/>
    <property type="project" value="InterPro"/>
</dbReference>
<dbReference type="GO" id="GO:0006412">
    <property type="term" value="P:translation"/>
    <property type="evidence" value="ECO:0007669"/>
    <property type="project" value="UniProtKB-UniRule"/>
</dbReference>
<dbReference type="CDD" id="cd01425">
    <property type="entry name" value="RPS2"/>
    <property type="match status" value="1"/>
</dbReference>
<dbReference type="FunFam" id="1.10.287.610:FF:000001">
    <property type="entry name" value="30S ribosomal protein S2"/>
    <property type="match status" value="1"/>
</dbReference>
<dbReference type="Gene3D" id="3.40.50.10490">
    <property type="entry name" value="Glucose-6-phosphate isomerase like protein, domain 1"/>
    <property type="match status" value="1"/>
</dbReference>
<dbReference type="Gene3D" id="1.10.287.610">
    <property type="entry name" value="Helix hairpin bin"/>
    <property type="match status" value="1"/>
</dbReference>
<dbReference type="HAMAP" id="MF_00291_B">
    <property type="entry name" value="Ribosomal_uS2_B"/>
    <property type="match status" value="1"/>
</dbReference>
<dbReference type="InterPro" id="IPR001865">
    <property type="entry name" value="Ribosomal_uS2"/>
</dbReference>
<dbReference type="InterPro" id="IPR005706">
    <property type="entry name" value="Ribosomal_uS2_bac/mit/plastid"/>
</dbReference>
<dbReference type="InterPro" id="IPR018130">
    <property type="entry name" value="Ribosomal_uS2_CS"/>
</dbReference>
<dbReference type="InterPro" id="IPR023591">
    <property type="entry name" value="Ribosomal_uS2_flav_dom_sf"/>
</dbReference>
<dbReference type="NCBIfam" id="TIGR01011">
    <property type="entry name" value="rpsB_bact"/>
    <property type="match status" value="1"/>
</dbReference>
<dbReference type="PANTHER" id="PTHR12534">
    <property type="entry name" value="30S RIBOSOMAL PROTEIN S2 PROKARYOTIC AND ORGANELLAR"/>
    <property type="match status" value="1"/>
</dbReference>
<dbReference type="PANTHER" id="PTHR12534:SF0">
    <property type="entry name" value="SMALL RIBOSOMAL SUBUNIT PROTEIN US2M"/>
    <property type="match status" value="1"/>
</dbReference>
<dbReference type="Pfam" id="PF00318">
    <property type="entry name" value="Ribosomal_S2"/>
    <property type="match status" value="1"/>
</dbReference>
<dbReference type="PRINTS" id="PR00395">
    <property type="entry name" value="RIBOSOMALS2"/>
</dbReference>
<dbReference type="SUPFAM" id="SSF52313">
    <property type="entry name" value="Ribosomal protein S2"/>
    <property type="match status" value="1"/>
</dbReference>
<dbReference type="PROSITE" id="PS00962">
    <property type="entry name" value="RIBOSOMAL_S2_1"/>
    <property type="match status" value="1"/>
</dbReference>
<dbReference type="PROSITE" id="PS00963">
    <property type="entry name" value="RIBOSOMAL_S2_2"/>
    <property type="match status" value="1"/>
</dbReference>
<feature type="chain" id="PRO_1000004033" description="Small ribosomal subunit protein uS2">
    <location>
        <begin position="1"/>
        <end position="242"/>
    </location>
</feature>
<keyword id="KW-1185">Reference proteome</keyword>
<keyword id="KW-0687">Ribonucleoprotein</keyword>
<keyword id="KW-0689">Ribosomal protein</keyword>
<proteinExistence type="inferred from homology"/>
<gene>
    <name evidence="1" type="primary">rpsB</name>
    <name type="ordered locus">PSHAa2036</name>
</gene>
<protein>
    <recommendedName>
        <fullName evidence="1">Small ribosomal subunit protein uS2</fullName>
    </recommendedName>
    <alternativeName>
        <fullName evidence="2">30S ribosomal protein S2</fullName>
    </alternativeName>
</protein>
<reference key="1">
    <citation type="journal article" date="2005" name="Genome Res.">
        <title>Coping with cold: the genome of the versatile marine Antarctica bacterium Pseudoalteromonas haloplanktis TAC125.</title>
        <authorList>
            <person name="Medigue C."/>
            <person name="Krin E."/>
            <person name="Pascal G."/>
            <person name="Barbe V."/>
            <person name="Bernsel A."/>
            <person name="Bertin P.N."/>
            <person name="Cheung F."/>
            <person name="Cruveiller S."/>
            <person name="D'Amico S."/>
            <person name="Duilio A."/>
            <person name="Fang G."/>
            <person name="Feller G."/>
            <person name="Ho C."/>
            <person name="Mangenot S."/>
            <person name="Marino G."/>
            <person name="Nilsson J."/>
            <person name="Parrilli E."/>
            <person name="Rocha E.P.C."/>
            <person name="Rouy Z."/>
            <person name="Sekowska A."/>
            <person name="Tutino M.L."/>
            <person name="Vallenet D."/>
            <person name="von Heijne G."/>
            <person name="Danchin A."/>
        </authorList>
    </citation>
    <scope>NUCLEOTIDE SEQUENCE [LARGE SCALE GENOMIC DNA]</scope>
    <source>
        <strain>TAC 125</strain>
    </source>
</reference>